<accession>Q9ADT1</accession>
<accession>Q603E9</accession>
<evidence type="ECO:0000255" key="1">
    <source>
        <dbReference type="HAMAP-Rule" id="MF_00579"/>
    </source>
</evidence>
<evidence type="ECO:0000303" key="2">
    <source>
    </source>
</evidence>
<evidence type="ECO:0000305" key="3"/>
<gene>
    <name evidence="1 2" type="primary">ffsA</name>
    <name type="ordered locus">MCA2858</name>
</gene>
<sequence length="298" mass="31545">MIINGVHIDETFAEAFPMRATRVIVTAQNLKWAHHAAQAMTGFATSVIACGCEAGIERELDPAETPDGRPGVSALLFAMGGKGLAKQLETRAGQCVLTSPTSALFAGIVEGEQIPLGKNLRYFGDGFQISKRIGGKRYWRIPVMDGEFLCQETTGMIKAVGGGNFLILAESQPQALAACEAAIEAMRRIPNVIMPFPGGVVRSGSKVGSKYKTLPASTNDAFCPTLKGQTRTELSPEIESVMEIVIDGLSDADIAKAMRAGIEAACGLGAANGIRRISAGNYGGKLGPFLFHLREIMA</sequence>
<proteinExistence type="inferred from homology"/>
<feature type="chain" id="PRO_0000138123" description="Formylmethanofuran--tetrahydromethanopterin formyltransferase">
    <location>
        <begin position="1"/>
        <end position="298"/>
    </location>
</feature>
<feature type="sequence conflict" description="In Ref. 1; AAK30007 and 2." evidence="3" ref="1 2">
    <original>F</original>
    <variation>S</variation>
    <location>
        <position position="12"/>
    </location>
</feature>
<protein>
    <recommendedName>
        <fullName evidence="1">Formylmethanofuran--tetrahydromethanopterin formyltransferase</fullName>
        <shortName evidence="1">Ftr</shortName>
        <ecNumber evidence="1">2.3.1.101</ecNumber>
    </recommendedName>
    <alternativeName>
        <fullName evidence="1">H4MPT formyltransferase</fullName>
    </alternativeName>
</protein>
<comment type="function">
    <text evidence="1">Catalyzes the transfer of a formyl group from 5-formyl tetrahydromethanopterin (5-formyl-H(4)MPT) to methanofuran (MFR) to produce formylmethanofuran (formyl-MFR) and tetrahydromethanopterin (H(4)MPT).</text>
</comment>
<comment type="catalytic activity">
    <reaction evidence="1">
        <text>N-formylmethanofuran + 5,6,7,8-tetrahydromethanopterin + H(+) = N(5)-formyl-5,6,7,8-tetrahydromethanopterin + methanofuran</text>
        <dbReference type="Rhea" id="RHEA:18061"/>
        <dbReference type="ChEBI" id="CHEBI:15378"/>
        <dbReference type="ChEBI" id="CHEBI:57727"/>
        <dbReference type="ChEBI" id="CHEBI:58018"/>
        <dbReference type="ChEBI" id="CHEBI:58103"/>
        <dbReference type="ChEBI" id="CHEBI:58151"/>
        <dbReference type="EC" id="2.3.1.101"/>
    </reaction>
</comment>
<comment type="pathway">
    <text evidence="1">One-carbon metabolism; formaldehyde degradation; formate from formaldehyde (H(4)MPT route): step 4/5.</text>
</comment>
<comment type="subunit">
    <text evidence="1">Homotetramer.</text>
</comment>
<comment type="subcellular location">
    <subcellularLocation>
        <location evidence="1">Cytoplasm</location>
    </subcellularLocation>
</comment>
<comment type="similarity">
    <text evidence="1">Belongs to the FTR family.</text>
</comment>
<organism>
    <name type="scientific">Methylococcus capsulatus (strain ATCC 33009 / NCIMB 11132 / Bath)</name>
    <dbReference type="NCBI Taxonomy" id="243233"/>
    <lineage>
        <taxon>Bacteria</taxon>
        <taxon>Pseudomonadati</taxon>
        <taxon>Pseudomonadota</taxon>
        <taxon>Gammaproteobacteria</taxon>
        <taxon>Methylococcales</taxon>
        <taxon>Methylococcaceae</taxon>
        <taxon>Methylococcus</taxon>
    </lineage>
</organism>
<keyword id="KW-0012">Acyltransferase</keyword>
<keyword id="KW-0963">Cytoplasm</keyword>
<keyword id="KW-0554">One-carbon metabolism</keyword>
<keyword id="KW-1185">Reference proteome</keyword>
<keyword id="KW-0808">Transferase</keyword>
<name>FTR_METCA</name>
<reference key="1">
    <citation type="journal article" date="1999" name="Microbiology">
        <title>Role of multiple gene copies in particulate methane monooxygenase activity in the methane-oxidizing bacterium Methylococcus capsulatus Bath.</title>
        <authorList>
            <person name="Stolyar S."/>
            <person name="Costello A.M."/>
            <person name="Peeples T.L."/>
            <person name="Lidstrom M.E."/>
        </authorList>
    </citation>
    <scope>NUCLEOTIDE SEQUENCE [GENOMIC DNA]</scope>
    <source>
        <strain>ATCC 33009 / NCIMB 11132 / Bath</strain>
    </source>
</reference>
<reference key="2">
    <citation type="journal article" date="2001" name="J. Bacteriol.">
        <title>Expression of individual copies of Methylococcus capsulatus bath particulate methane monooxygenase genes.</title>
        <authorList>
            <person name="Stolyar S."/>
            <person name="Franke M."/>
            <person name="Lidstrom M.E."/>
        </authorList>
    </citation>
    <scope>NUCLEOTIDE SEQUENCE [GENOMIC DNA]</scope>
    <source>
        <strain>ATCC 33009 / NCIMB 11132 / Bath</strain>
    </source>
</reference>
<reference key="3">
    <citation type="journal article" date="2004" name="PLoS Biol.">
        <title>Genomic insights into methanotrophy: the complete genome sequence of Methylococcus capsulatus (Bath).</title>
        <authorList>
            <person name="Ward N.L."/>
            <person name="Larsen O."/>
            <person name="Sakwa J."/>
            <person name="Bruseth L."/>
            <person name="Khouri H.M."/>
            <person name="Durkin A.S."/>
            <person name="Dimitrov G."/>
            <person name="Jiang L."/>
            <person name="Scanlan D."/>
            <person name="Kang K.H."/>
            <person name="Lewis M.R."/>
            <person name="Nelson K.E."/>
            <person name="Methe B.A."/>
            <person name="Wu M."/>
            <person name="Heidelberg J.F."/>
            <person name="Paulsen I.T."/>
            <person name="Fouts D.E."/>
            <person name="Ravel J."/>
            <person name="Tettelin H."/>
            <person name="Ren Q."/>
            <person name="Read T.D."/>
            <person name="DeBoy R.T."/>
            <person name="Seshadri R."/>
            <person name="Salzberg S.L."/>
            <person name="Jensen H.B."/>
            <person name="Birkeland N.K."/>
            <person name="Nelson W.C."/>
            <person name="Dodson R.J."/>
            <person name="Grindhaug S.H."/>
            <person name="Holt I.E."/>
            <person name="Eidhammer I."/>
            <person name="Jonasen I."/>
            <person name="Vanaken S."/>
            <person name="Utterback T.R."/>
            <person name="Feldblyum T.V."/>
            <person name="Fraser C.M."/>
            <person name="Lillehaug J.R."/>
            <person name="Eisen J.A."/>
        </authorList>
    </citation>
    <scope>NUCLEOTIDE SEQUENCE [LARGE SCALE GENOMIC DNA]</scope>
    <source>
        <strain>ATCC 33009 / NCIMB 11132 / Bath</strain>
    </source>
</reference>
<dbReference type="EC" id="2.3.1.101" evidence="1"/>
<dbReference type="EMBL" id="U94337">
    <property type="protein sequence ID" value="AAK30007.1"/>
    <property type="molecule type" value="Genomic_DNA"/>
</dbReference>
<dbReference type="EMBL" id="AE017282">
    <property type="protein sequence ID" value="AAU91105.1"/>
    <property type="molecule type" value="Genomic_DNA"/>
</dbReference>
<dbReference type="SMR" id="Q9ADT1"/>
<dbReference type="STRING" id="243233.MCA2858"/>
<dbReference type="GeneID" id="88225032"/>
<dbReference type="KEGG" id="mca:MCA2858"/>
<dbReference type="eggNOG" id="COG2037">
    <property type="taxonomic scope" value="Bacteria"/>
</dbReference>
<dbReference type="HOGENOM" id="CLU_081314_0_0_6"/>
<dbReference type="UniPathway" id="UPA00562">
    <property type="reaction ID" value="UER00704"/>
</dbReference>
<dbReference type="Proteomes" id="UP000006821">
    <property type="component" value="Chromosome"/>
</dbReference>
<dbReference type="GO" id="GO:0005737">
    <property type="term" value="C:cytoplasm"/>
    <property type="evidence" value="ECO:0007669"/>
    <property type="project" value="UniProtKB-SubCell"/>
</dbReference>
<dbReference type="GO" id="GO:0030270">
    <property type="term" value="F:formylmethanofuran-tetrahydromethanopterin N-formyltransferase activity"/>
    <property type="evidence" value="ECO:0007669"/>
    <property type="project" value="UniProtKB-UniRule"/>
</dbReference>
<dbReference type="GO" id="GO:0046294">
    <property type="term" value="P:formaldehyde catabolic process"/>
    <property type="evidence" value="ECO:0007669"/>
    <property type="project" value="UniProtKB-UniRule"/>
</dbReference>
<dbReference type="GO" id="GO:0006730">
    <property type="term" value="P:one-carbon metabolic process"/>
    <property type="evidence" value="ECO:0007669"/>
    <property type="project" value="UniProtKB-UniRule"/>
</dbReference>
<dbReference type="FunFam" id="3.30.70.520:FF:000001">
    <property type="entry name" value="Formylmethanofuran--tetrahydromethanopterin formyltransferase"/>
    <property type="match status" value="1"/>
</dbReference>
<dbReference type="Gene3D" id="3.30.70.520">
    <property type="match status" value="2"/>
</dbReference>
<dbReference type="HAMAP" id="MF_00579">
    <property type="entry name" value="FTR"/>
    <property type="match status" value="1"/>
</dbReference>
<dbReference type="InterPro" id="IPR014053">
    <property type="entry name" value="ForMFR_H4MPT_ForTrfase"/>
</dbReference>
<dbReference type="InterPro" id="IPR002770">
    <property type="entry name" value="ForMFR_H4MPT_ForTrfase_C"/>
</dbReference>
<dbReference type="InterPro" id="IPR023447">
    <property type="entry name" value="ForMFR_H4MPT_ForTrfase_fd-like"/>
</dbReference>
<dbReference type="InterPro" id="IPR022667">
    <property type="entry name" value="ForMFR_H4MPT_ForTrfase_N"/>
</dbReference>
<dbReference type="NCBIfam" id="TIGR03119">
    <property type="entry name" value="one_C_fhcD"/>
    <property type="match status" value="1"/>
</dbReference>
<dbReference type="NCBIfam" id="NF002554">
    <property type="entry name" value="PRK02114.1"/>
    <property type="match status" value="1"/>
</dbReference>
<dbReference type="Pfam" id="PF01913">
    <property type="entry name" value="FTR"/>
    <property type="match status" value="1"/>
</dbReference>
<dbReference type="Pfam" id="PF02741">
    <property type="entry name" value="FTR_C"/>
    <property type="match status" value="1"/>
</dbReference>
<dbReference type="PIRSF" id="PIRSF006414">
    <property type="entry name" value="Ftr_formyl_trnsf"/>
    <property type="match status" value="1"/>
</dbReference>
<dbReference type="SUPFAM" id="SSF55112">
    <property type="entry name" value="Formylmethanofuran:tetrahydromethanopterin formyltransferase"/>
    <property type="match status" value="2"/>
</dbReference>